<reference key="1">
    <citation type="journal article" date="2000" name="Cytokine">
        <title>Subtraction cloning and initial characterization of novel EPO-immediate response genes.</title>
        <authorList>
            <person name="Gregory R.C. Jr."/>
            <person name="Lord K.A."/>
            <person name="Panek L.B."/>
            <person name="Gaines P."/>
            <person name="Dillon S.B."/>
            <person name="Wojchowski D.M."/>
        </authorList>
    </citation>
    <scope>NUCLEOTIDE SEQUENCE [MRNA]</scope>
    <scope>TISSUE SPECIFICITY</scope>
    <scope>INDUCTION</scope>
    <source>
        <tissue>Erythroleukemia</tissue>
    </source>
</reference>
<reference key="2">
    <citation type="journal article" date="2005" name="Science">
        <title>The transcriptional landscape of the mammalian genome.</title>
        <authorList>
            <person name="Carninci P."/>
            <person name="Kasukawa T."/>
            <person name="Katayama S."/>
            <person name="Gough J."/>
            <person name="Frith M.C."/>
            <person name="Maeda N."/>
            <person name="Oyama R."/>
            <person name="Ravasi T."/>
            <person name="Lenhard B."/>
            <person name="Wells C."/>
            <person name="Kodzius R."/>
            <person name="Shimokawa K."/>
            <person name="Bajic V.B."/>
            <person name="Brenner S.E."/>
            <person name="Batalov S."/>
            <person name="Forrest A.R."/>
            <person name="Zavolan M."/>
            <person name="Davis M.J."/>
            <person name="Wilming L.G."/>
            <person name="Aidinis V."/>
            <person name="Allen J.E."/>
            <person name="Ambesi-Impiombato A."/>
            <person name="Apweiler R."/>
            <person name="Aturaliya R.N."/>
            <person name="Bailey T.L."/>
            <person name="Bansal M."/>
            <person name="Baxter L."/>
            <person name="Beisel K.W."/>
            <person name="Bersano T."/>
            <person name="Bono H."/>
            <person name="Chalk A.M."/>
            <person name="Chiu K.P."/>
            <person name="Choudhary V."/>
            <person name="Christoffels A."/>
            <person name="Clutterbuck D.R."/>
            <person name="Crowe M.L."/>
            <person name="Dalla E."/>
            <person name="Dalrymple B.P."/>
            <person name="de Bono B."/>
            <person name="Della Gatta G."/>
            <person name="di Bernardo D."/>
            <person name="Down T."/>
            <person name="Engstrom P."/>
            <person name="Fagiolini M."/>
            <person name="Faulkner G."/>
            <person name="Fletcher C.F."/>
            <person name="Fukushima T."/>
            <person name="Furuno M."/>
            <person name="Futaki S."/>
            <person name="Gariboldi M."/>
            <person name="Georgii-Hemming P."/>
            <person name="Gingeras T.R."/>
            <person name="Gojobori T."/>
            <person name="Green R.E."/>
            <person name="Gustincich S."/>
            <person name="Harbers M."/>
            <person name="Hayashi Y."/>
            <person name="Hensch T.K."/>
            <person name="Hirokawa N."/>
            <person name="Hill D."/>
            <person name="Huminiecki L."/>
            <person name="Iacono M."/>
            <person name="Ikeo K."/>
            <person name="Iwama A."/>
            <person name="Ishikawa T."/>
            <person name="Jakt M."/>
            <person name="Kanapin A."/>
            <person name="Katoh M."/>
            <person name="Kawasawa Y."/>
            <person name="Kelso J."/>
            <person name="Kitamura H."/>
            <person name="Kitano H."/>
            <person name="Kollias G."/>
            <person name="Krishnan S.P."/>
            <person name="Kruger A."/>
            <person name="Kummerfeld S.K."/>
            <person name="Kurochkin I.V."/>
            <person name="Lareau L.F."/>
            <person name="Lazarevic D."/>
            <person name="Lipovich L."/>
            <person name="Liu J."/>
            <person name="Liuni S."/>
            <person name="McWilliam S."/>
            <person name="Madan Babu M."/>
            <person name="Madera M."/>
            <person name="Marchionni L."/>
            <person name="Matsuda H."/>
            <person name="Matsuzawa S."/>
            <person name="Miki H."/>
            <person name="Mignone F."/>
            <person name="Miyake S."/>
            <person name="Morris K."/>
            <person name="Mottagui-Tabar S."/>
            <person name="Mulder N."/>
            <person name="Nakano N."/>
            <person name="Nakauchi H."/>
            <person name="Ng P."/>
            <person name="Nilsson R."/>
            <person name="Nishiguchi S."/>
            <person name="Nishikawa S."/>
            <person name="Nori F."/>
            <person name="Ohara O."/>
            <person name="Okazaki Y."/>
            <person name="Orlando V."/>
            <person name="Pang K.C."/>
            <person name="Pavan W.J."/>
            <person name="Pavesi G."/>
            <person name="Pesole G."/>
            <person name="Petrovsky N."/>
            <person name="Piazza S."/>
            <person name="Reed J."/>
            <person name="Reid J.F."/>
            <person name="Ring B.Z."/>
            <person name="Ringwald M."/>
            <person name="Rost B."/>
            <person name="Ruan Y."/>
            <person name="Salzberg S.L."/>
            <person name="Sandelin A."/>
            <person name="Schneider C."/>
            <person name="Schoenbach C."/>
            <person name="Sekiguchi K."/>
            <person name="Semple C.A."/>
            <person name="Seno S."/>
            <person name="Sessa L."/>
            <person name="Sheng Y."/>
            <person name="Shibata Y."/>
            <person name="Shimada H."/>
            <person name="Shimada K."/>
            <person name="Silva D."/>
            <person name="Sinclair B."/>
            <person name="Sperling S."/>
            <person name="Stupka E."/>
            <person name="Sugiura K."/>
            <person name="Sultana R."/>
            <person name="Takenaka Y."/>
            <person name="Taki K."/>
            <person name="Tammoja K."/>
            <person name="Tan S.L."/>
            <person name="Tang S."/>
            <person name="Taylor M.S."/>
            <person name="Tegner J."/>
            <person name="Teichmann S.A."/>
            <person name="Ueda H.R."/>
            <person name="van Nimwegen E."/>
            <person name="Verardo R."/>
            <person name="Wei C.L."/>
            <person name="Yagi K."/>
            <person name="Yamanishi H."/>
            <person name="Zabarovsky E."/>
            <person name="Zhu S."/>
            <person name="Zimmer A."/>
            <person name="Hide W."/>
            <person name="Bult C."/>
            <person name="Grimmond S.M."/>
            <person name="Teasdale R.D."/>
            <person name="Liu E.T."/>
            <person name="Brusic V."/>
            <person name="Quackenbush J."/>
            <person name="Wahlestedt C."/>
            <person name="Mattick J.S."/>
            <person name="Hume D.A."/>
            <person name="Kai C."/>
            <person name="Sasaki D."/>
            <person name="Tomaru Y."/>
            <person name="Fukuda S."/>
            <person name="Kanamori-Katayama M."/>
            <person name="Suzuki M."/>
            <person name="Aoki J."/>
            <person name="Arakawa T."/>
            <person name="Iida J."/>
            <person name="Imamura K."/>
            <person name="Itoh M."/>
            <person name="Kato T."/>
            <person name="Kawaji H."/>
            <person name="Kawagashira N."/>
            <person name="Kawashima T."/>
            <person name="Kojima M."/>
            <person name="Kondo S."/>
            <person name="Konno H."/>
            <person name="Nakano K."/>
            <person name="Ninomiya N."/>
            <person name="Nishio T."/>
            <person name="Okada M."/>
            <person name="Plessy C."/>
            <person name="Shibata K."/>
            <person name="Shiraki T."/>
            <person name="Suzuki S."/>
            <person name="Tagami M."/>
            <person name="Waki K."/>
            <person name="Watahiki A."/>
            <person name="Okamura-Oho Y."/>
            <person name="Suzuki H."/>
            <person name="Kawai J."/>
            <person name="Hayashizaki Y."/>
        </authorList>
    </citation>
    <scope>NUCLEOTIDE SEQUENCE [LARGE SCALE MRNA]</scope>
    <source>
        <strain>C57BL/6J</strain>
        <tissue>Liver</tissue>
    </source>
</reference>
<reference key="3">
    <citation type="journal article" date="2004" name="Genome Res.">
        <title>The status, quality, and expansion of the NIH full-length cDNA project: the Mammalian Gene Collection (MGC).</title>
        <authorList>
            <consortium name="The MGC Project Team"/>
        </authorList>
    </citation>
    <scope>NUCLEOTIDE SEQUENCE [LARGE SCALE MRNA]</scope>
    <source>
        <strain>C57BL/6J</strain>
        <tissue>Brain</tissue>
    </source>
</reference>
<reference key="4">
    <citation type="journal article" date="2002" name="EMBO J.">
        <title>Mammalian Rcd1 is a novel transcriptional cofactor that mediates retinoic acid-induced cell differentiation.</title>
        <authorList>
            <person name="Hiroi N."/>
            <person name="Ito T."/>
            <person name="Yamamoto H."/>
            <person name="Ochiya T."/>
            <person name="Jinno S."/>
            <person name="Okayama H."/>
        </authorList>
    </citation>
    <scope>FUNCTION</scope>
    <scope>INDUCTION</scope>
    <scope>IDENTIFICATION IN A COMPLEX WITH ATF2 BOUND TO TARGET DNA</scope>
    <scope>INTERACTION WITH ATF2; RARA; RARB; RARG; RXRA; RXRB AND RXRG</scope>
</reference>
<reference key="5">
    <citation type="journal article" date="2004" name="Biochemistry">
        <title>c-Myb protein interacts with Rcd-1, a component of the CCR4 transcription mediator complex.</title>
        <authorList>
            <person name="Haas M."/>
            <person name="Siegert M."/>
            <person name="Schuermann A."/>
            <person name="Sodeik B."/>
            <person name="Wolfes H."/>
        </authorList>
    </citation>
    <scope>FUNCTION</scope>
    <scope>INTERACTION WITH MYB</scope>
    <scope>INDUCTION</scope>
    <scope>SUBCELLULAR LOCATION</scope>
</reference>
<reference key="6">
    <citation type="journal article" date="2010" name="Cell">
        <title>A tissue-specific atlas of mouse protein phosphorylation and expression.</title>
        <authorList>
            <person name="Huttlin E.L."/>
            <person name="Jedrychowski M.P."/>
            <person name="Elias J.E."/>
            <person name="Goswami T."/>
            <person name="Rad R."/>
            <person name="Beausoleil S.A."/>
            <person name="Villen J."/>
            <person name="Haas W."/>
            <person name="Sowa M.E."/>
            <person name="Gygi S.P."/>
        </authorList>
    </citation>
    <scope>IDENTIFICATION BY MASS SPECTROMETRY [LARGE SCALE ANALYSIS]</scope>
    <source>
        <tissue>Brain</tissue>
        <tissue>Brown adipose tissue</tissue>
        <tissue>Heart</tissue>
        <tissue>Kidney</tissue>
        <tissue>Liver</tissue>
        <tissue>Lung</tissue>
        <tissue>Pancreas</tissue>
        <tissue>Spleen</tissue>
        <tissue>Testis</tissue>
    </source>
</reference>
<reference key="7">
    <citation type="journal article" date="2010" name="Proc. Natl. Acad. Sci. U.S.A.">
        <title>NANOS2 interacts with the CCR4-NOT deadenylation complex and leads to suppression of specific RNAs.</title>
        <authorList>
            <person name="Suzuki A."/>
            <person name="Igarashi K."/>
            <person name="Aisaki K."/>
            <person name="Kanno J."/>
            <person name="Saga Y."/>
        </authorList>
    </citation>
    <scope>SUBCELLULAR LOCATION</scope>
    <scope>INTERACTION WITH NANOS2</scope>
</reference>
<name>CNOT9_MOUSE</name>
<keyword id="KW-0007">Acetylation</keyword>
<keyword id="KW-0010">Activator</keyword>
<keyword id="KW-0963">Cytoplasm</keyword>
<keyword id="KW-0539">Nucleus</keyword>
<keyword id="KW-1185">Reference proteome</keyword>
<keyword id="KW-0678">Repressor</keyword>
<keyword id="KW-0943">RNA-mediated gene silencing</keyword>
<keyword id="KW-0804">Transcription</keyword>
<keyword id="KW-0805">Transcription regulation</keyword>
<keyword id="KW-0810">Translation regulation</keyword>
<sequence>MHSLATAAPVPTALAQVDREKIYQWINELSSPETRENALLELSKKRESVPDLAPMLWHSFGTIAALLQEIVNIYPSINPPTLTAHQSNRVCNALALLQCVASHPETRSAFLAAHIPLFLYPFLHTVSKTRPFEYLRLTSLGVIGALVKTDEQEVINFLLTTEIIPLCLRIMESGSELSKTVATFILQKILLDDTGLAYICQTYERFSHVAMILGKMVLQLSKEPSARLLKHVVRCYLRLSDNPRAREALRQCLPDQLKDTTFAQVLKDDTTTKRWLAQLVKNLQEGQVTDPRGIPLPPQ</sequence>
<dbReference type="EMBL" id="AF221849">
    <property type="protein sequence ID" value="AAF61701.1"/>
    <property type="molecule type" value="mRNA"/>
</dbReference>
<dbReference type="EMBL" id="AK005025">
    <property type="protein sequence ID" value="BAB23752.1"/>
    <property type="molecule type" value="mRNA"/>
</dbReference>
<dbReference type="EMBL" id="BC050898">
    <property type="protein sequence ID" value="AAH50898.1"/>
    <property type="molecule type" value="mRNA"/>
</dbReference>
<dbReference type="EMBL" id="BC051948">
    <property type="protein sequence ID" value="AAH51948.1"/>
    <property type="molecule type" value="mRNA"/>
</dbReference>
<dbReference type="CCDS" id="CCDS35615.1"/>
<dbReference type="RefSeq" id="NP_067358.1">
    <property type="nucleotide sequence ID" value="NM_021383.5"/>
</dbReference>
<dbReference type="SMR" id="Q9JKY0"/>
<dbReference type="BioGRID" id="208377">
    <property type="interactions" value="4"/>
</dbReference>
<dbReference type="CORUM" id="Q9JKY0"/>
<dbReference type="DIP" id="DIP-34266N"/>
<dbReference type="FunCoup" id="Q9JKY0">
    <property type="interactions" value="2198"/>
</dbReference>
<dbReference type="IntAct" id="Q9JKY0">
    <property type="interactions" value="7"/>
</dbReference>
<dbReference type="MINT" id="Q9JKY0"/>
<dbReference type="STRING" id="10090.ENSMUSP00000084466"/>
<dbReference type="PhosphoSitePlus" id="Q9JKY0"/>
<dbReference type="SwissPalm" id="Q9JKY0"/>
<dbReference type="PaxDb" id="10090-ENSMUSP00000084466"/>
<dbReference type="PeptideAtlas" id="Q9JKY0"/>
<dbReference type="ProteomicsDB" id="279125"/>
<dbReference type="Pumba" id="Q9JKY0"/>
<dbReference type="Antibodypedia" id="51420">
    <property type="antibodies" value="115 antibodies from 22 providers"/>
</dbReference>
<dbReference type="DNASU" id="58184"/>
<dbReference type="Ensembl" id="ENSMUST00000087215.7">
    <property type="protein sequence ID" value="ENSMUSP00000084466.6"/>
    <property type="gene ID" value="ENSMUSG00000026174.10"/>
</dbReference>
<dbReference type="GeneID" id="58184"/>
<dbReference type="KEGG" id="mmu:58184"/>
<dbReference type="UCSC" id="uc007bmf.2">
    <property type="organism name" value="mouse"/>
</dbReference>
<dbReference type="AGR" id="MGI:1928902"/>
<dbReference type="CTD" id="9125"/>
<dbReference type="MGI" id="MGI:1928902">
    <property type="gene designation" value="Cnot9"/>
</dbReference>
<dbReference type="VEuPathDB" id="HostDB:ENSMUSG00000026174"/>
<dbReference type="eggNOG" id="KOG3036">
    <property type="taxonomic scope" value="Eukaryota"/>
</dbReference>
<dbReference type="GeneTree" id="ENSGT00390000001225"/>
<dbReference type="HOGENOM" id="CLU_039962_2_0_1"/>
<dbReference type="InParanoid" id="Q9JKY0"/>
<dbReference type="OMA" id="EKVYTWI"/>
<dbReference type="OrthoDB" id="1183224at2759"/>
<dbReference type="PhylomeDB" id="Q9JKY0"/>
<dbReference type="TreeFam" id="TF105734"/>
<dbReference type="Reactome" id="R-MMU-429947">
    <property type="pathway name" value="Deadenylation of mRNA"/>
</dbReference>
<dbReference type="Reactome" id="R-MMU-6804115">
    <property type="pathway name" value="TP53 regulates transcription of additional cell cycle genes whose exact role in the p53 pathway remain uncertain"/>
</dbReference>
<dbReference type="BioGRID-ORCS" id="58184">
    <property type="hits" value="15 hits in 76 CRISPR screens"/>
</dbReference>
<dbReference type="ChiTaRS" id="Cnot9">
    <property type="organism name" value="mouse"/>
</dbReference>
<dbReference type="PRO" id="PR:Q9JKY0"/>
<dbReference type="Proteomes" id="UP000000589">
    <property type="component" value="Chromosome 1"/>
</dbReference>
<dbReference type="RNAct" id="Q9JKY0">
    <property type="molecule type" value="protein"/>
</dbReference>
<dbReference type="Bgee" id="ENSMUSG00000026174">
    <property type="expression patterns" value="Expressed in dorsal pancreas and 263 other cell types or tissues"/>
</dbReference>
<dbReference type="GO" id="GO:0030014">
    <property type="term" value="C:CCR4-NOT complex"/>
    <property type="evidence" value="ECO:0000250"/>
    <property type="project" value="UniProtKB"/>
</dbReference>
<dbReference type="GO" id="GO:0005829">
    <property type="term" value="C:cytosol"/>
    <property type="evidence" value="ECO:0000304"/>
    <property type="project" value="Reactome"/>
</dbReference>
<dbReference type="GO" id="GO:0005634">
    <property type="term" value="C:nucleus"/>
    <property type="evidence" value="ECO:0007669"/>
    <property type="project" value="UniProtKB-SubCell"/>
</dbReference>
<dbReference type="GO" id="GO:0000932">
    <property type="term" value="C:P-body"/>
    <property type="evidence" value="ECO:0000314"/>
    <property type="project" value="UniProtKB"/>
</dbReference>
<dbReference type="GO" id="GO:0005154">
    <property type="term" value="F:epidermal growth factor receptor binding"/>
    <property type="evidence" value="ECO:0007669"/>
    <property type="project" value="Ensembl"/>
</dbReference>
<dbReference type="GO" id="GO:0019900">
    <property type="term" value="F:kinase binding"/>
    <property type="evidence" value="ECO:0007669"/>
    <property type="project" value="Ensembl"/>
</dbReference>
<dbReference type="GO" id="GO:0019904">
    <property type="term" value="F:protein domain specific binding"/>
    <property type="evidence" value="ECO:0007669"/>
    <property type="project" value="Ensembl"/>
</dbReference>
<dbReference type="GO" id="GO:0042803">
    <property type="term" value="F:protein homodimerization activity"/>
    <property type="evidence" value="ECO:0007669"/>
    <property type="project" value="Ensembl"/>
</dbReference>
<dbReference type="GO" id="GO:0003713">
    <property type="term" value="F:transcription coactivator activity"/>
    <property type="evidence" value="ECO:0000250"/>
    <property type="project" value="UniProtKB"/>
</dbReference>
<dbReference type="GO" id="GO:0019221">
    <property type="term" value="P:cytokine-mediated signaling pathway"/>
    <property type="evidence" value="ECO:0000314"/>
    <property type="project" value="MGI"/>
</dbReference>
<dbReference type="GO" id="GO:0006402">
    <property type="term" value="P:mRNA catabolic process"/>
    <property type="evidence" value="ECO:0007669"/>
    <property type="project" value="InterPro"/>
</dbReference>
<dbReference type="GO" id="GO:0033147">
    <property type="term" value="P:negative regulation of intracellular estrogen receptor signaling pathway"/>
    <property type="evidence" value="ECO:0000250"/>
    <property type="project" value="UniProtKB"/>
</dbReference>
<dbReference type="GO" id="GO:0045742">
    <property type="term" value="P:positive regulation of epidermal growth factor receptor signaling pathway"/>
    <property type="evidence" value="ECO:0007669"/>
    <property type="project" value="Ensembl"/>
</dbReference>
<dbReference type="GO" id="GO:0006417">
    <property type="term" value="P:regulation of translation"/>
    <property type="evidence" value="ECO:0007669"/>
    <property type="project" value="UniProtKB-KW"/>
</dbReference>
<dbReference type="GO" id="GO:0031047">
    <property type="term" value="P:regulatory ncRNA-mediated gene silencing"/>
    <property type="evidence" value="ECO:0007669"/>
    <property type="project" value="UniProtKB-KW"/>
</dbReference>
<dbReference type="FunFam" id="1.25.10.10:FF:000037">
    <property type="entry name" value="CCR4-NOT transcription complex subunit 9"/>
    <property type="match status" value="1"/>
</dbReference>
<dbReference type="Gene3D" id="1.25.10.10">
    <property type="entry name" value="Leucine-rich Repeat Variant"/>
    <property type="match status" value="1"/>
</dbReference>
<dbReference type="InterPro" id="IPR011989">
    <property type="entry name" value="ARM-like"/>
</dbReference>
<dbReference type="InterPro" id="IPR016024">
    <property type="entry name" value="ARM-type_fold"/>
</dbReference>
<dbReference type="InterPro" id="IPR007216">
    <property type="entry name" value="CNOT9"/>
</dbReference>
<dbReference type="PANTHER" id="PTHR12262">
    <property type="entry name" value="CCR4-NOT TRANSCRIPTION COMPLEX SUBUNIT 9"/>
    <property type="match status" value="1"/>
</dbReference>
<dbReference type="Pfam" id="PF04078">
    <property type="entry name" value="Rcd1"/>
    <property type="match status" value="1"/>
</dbReference>
<dbReference type="SUPFAM" id="SSF48371">
    <property type="entry name" value="ARM repeat"/>
    <property type="match status" value="1"/>
</dbReference>
<evidence type="ECO:0000250" key="1"/>
<evidence type="ECO:0000250" key="2">
    <source>
        <dbReference type="UniProtKB" id="Q92600"/>
    </source>
</evidence>
<evidence type="ECO:0000269" key="3">
    <source>
    </source>
</evidence>
<evidence type="ECO:0000269" key="4">
    <source>
    </source>
</evidence>
<evidence type="ECO:0000269" key="5">
    <source>
    </source>
</evidence>
<evidence type="ECO:0000269" key="6">
    <source>
    </source>
</evidence>
<evidence type="ECO:0000305" key="7"/>
<evidence type="ECO:0000312" key="8">
    <source>
        <dbReference type="MGI" id="MGI:1928902"/>
    </source>
</evidence>
<comment type="function">
    <text evidence="4 5">Component of the CCR4-NOT complex which is one of the major cellular mRNA deadenylases and is linked to various cellular processes including bulk mRNA degradation, miRNA-mediated repression, translational repression during translational initiation and general transcription regulation. Additional complex functions may be a consequence of its influence on mRNA expression. Involved in down-regulation of MYB- and JUN-dependent transcription. May play a role in cell differentiation. Required for retinoic acid-induced differentiation of F9 teratocarcinoma cells. Does not bind DNA by itself. Enhances ligand-dependent transcriptional activity of nuclear hormone receptors. May play a role in cell differentiation.</text>
</comment>
<comment type="subunit">
    <text evidence="1">Homodimer. Component of the CCR4-NOT complex; distinct complexes seem to exist that differ in the participation of probably mutually exclusive catalytic subunits. Interacts with MYB, ATF2, RARA, RARB, RARG, RXRA, RXRB and RXRG. Identified in a complex with ATF2 bound to target DNA. Interacts with NANOS2. Directly interacts with ZNF335 (By similarity).</text>
</comment>
<comment type="subcellular location">
    <subcellularLocation>
        <location evidence="5">Nucleus</location>
    </subcellularLocation>
    <subcellularLocation>
        <location evidence="6">Cytoplasm</location>
        <location evidence="6">P-body</location>
    </subcellularLocation>
    <text evidence="6">NANOS2 promotes its localization to P-body.</text>
</comment>
<comment type="tissue specificity">
    <text evidence="3">Detected at low levels in bone marrow and thymus.</text>
</comment>
<comment type="induction">
    <text evidence="3 4 5">Up-regulated by EPO and EGF. Transiently up-regulated by retinoic acid in F9 teratocarcinoma cells.</text>
</comment>
<comment type="similarity">
    <text evidence="7">Belongs to the CNOT9 family.</text>
</comment>
<gene>
    <name evidence="8" type="primary">Cnot9</name>
    <name type="synonym">Rcd1</name>
    <name type="synonym">Rqcd1</name>
</gene>
<feature type="chain" id="PRO_0000327227" description="CCR4-NOT transcription complex subunit 9">
    <location>
        <begin position="1"/>
        <end position="299"/>
    </location>
</feature>
<feature type="modified residue" description="N-acetylmethionine" evidence="2">
    <location>
        <position position="1"/>
    </location>
</feature>
<organism>
    <name type="scientific">Mus musculus</name>
    <name type="common">Mouse</name>
    <dbReference type="NCBI Taxonomy" id="10090"/>
    <lineage>
        <taxon>Eukaryota</taxon>
        <taxon>Metazoa</taxon>
        <taxon>Chordata</taxon>
        <taxon>Craniata</taxon>
        <taxon>Vertebrata</taxon>
        <taxon>Euteleostomi</taxon>
        <taxon>Mammalia</taxon>
        <taxon>Eutheria</taxon>
        <taxon>Euarchontoglires</taxon>
        <taxon>Glires</taxon>
        <taxon>Rodentia</taxon>
        <taxon>Myomorpha</taxon>
        <taxon>Muroidea</taxon>
        <taxon>Muridae</taxon>
        <taxon>Murinae</taxon>
        <taxon>Mus</taxon>
        <taxon>Mus</taxon>
    </lineage>
</organism>
<protein>
    <recommendedName>
        <fullName evidence="8">CCR4-NOT transcription complex subunit 9</fullName>
    </recommendedName>
    <alternativeName>
        <fullName>Cell differentiation protein RQCD1 homolog</fullName>
        <shortName>Rcd-1</shortName>
    </alternativeName>
    <alternativeName>
        <fullName>EPO-induced protein FL10</fullName>
    </alternativeName>
</protein>
<proteinExistence type="evidence at protein level"/>
<accession>Q9JKY0</accession>